<keyword id="KW-0130">Cell adhesion</keyword>
<keyword id="KW-1003">Cell membrane</keyword>
<keyword id="KW-0903">Direct protein sequencing</keyword>
<keyword id="KW-1015">Disulfide bond</keyword>
<keyword id="KW-0325">Glycoprotein</keyword>
<keyword id="KW-0393">Immunoglobulin domain</keyword>
<keyword id="KW-0472">Membrane</keyword>
<keyword id="KW-1185">Reference proteome</keyword>
<keyword id="KW-0677">Repeat</keyword>
<keyword id="KW-0732">Signal</keyword>
<keyword id="KW-0812">Transmembrane</keyword>
<keyword id="KW-1133">Transmembrane helix</keyword>
<accession>Q03696</accession>
<sequence length="1266" mass="136571">MALPMVGLLLLLLLGGPGAAITIPPEYGAHDFLQPPELTEEPPEQLVVFPSDDIVLKCVATGNPPVQYRWSREDQPFVPEEHGGVSVVPGSGTLVINATLAARLQGRFRCFATNALGTAVSPEANVIAENTPQWPKEKVTPVEVEEGDPVVLPCDPPESAVPPKIYWLNSDIVHIAQDERVSMGQDGNLYFSNAMVGDSHPDYICHAHFLGPRTIIQKEPLDLRVAPSNAVRSRRPRLLLPRDPQTTTIALRGGSVVLECIAEGLPTPWVRWRRLNGPLLPGGVGNFNKTLRLWGVTESDDGEYECVAENGRGTARGTHSVTVEAAPYWVRRPQSGVFGPGETARLDCEVGGKPRPQIQWSINGVPIEAAGAERRWLRGGALVLPELRPNDSAVLQCEARNRHGPLLANAFLHVVELPLRMLTADEQRYEVVENQTVFLHCRTFGAPAPNVEWLTPTLEPALQDDRSFVFTNGSLRVSAVRGGDGGVYTCMAQNAHSNGSLTALLEVRAPTRISAPPRSATAKKGETVTFHCGATFDPAVTPGELRWLRGGQPLPDDPRYSVAAEMTVSNVDYGDEGTIQCRASTPLDSAEAEAQLRVVGRPPSRDLQVMEVDEHRVRLSWTPGDDHNSPIEKFVVEEEEEREDLQRGFGAADVPGQPWTPPLPLSPYGRFPFRVVAVNAYGRGEHHAPSAPIETPPAAPERNPGGVHGEGNETGNLVITWEPLPPQAWNAPWARYRVQWRPLEEPGGGGPSGGFPWAESTVDAPPVVVGGLPPFSPFQIRVQAVNGAGKGPEATPGVGHSGEDLPLVYPENVGVELLNSSTVRVRWTLGGGPKELRGRLRGFRVLYWRLGWVGERSRRQAPPDPPQIPQSPAEDPPPFPPVALTVGGDARGALLGGLRPWSRYQLRVLVFNGRGDGPPSEPIAFETPEGVPGPPEELRVERLDDTALSVVERRTFKRSITGYVLRYQQVEPGSALPGGSVLRDPQCDLRGLNARSRYRLALPSTPRERPALQTVGSTKPEPPSPLWSRFGVGGRGGFHGAAVEFGAAQEDDVEFEVQFMNKSTDEPWRTSGRANSSLRRYRLEGLRPGTAYRVQFVGRNRSGENVAFWESEVQTNGTVVPQPGGGVCTKGWFIGFVSSVVLLLLILLILCFIKRSKGGKYSVKDKEDTQVDSEARPMKDETFGEYRSLESEAEKGSASGSGAGSGVGSPGRGPCAAGSEDSLAGYGGSGDVQFNEDGSFIGQYRGPGAGPGSSGPASPCAGPPLD</sequence>
<evidence type="ECO:0000255" key="1"/>
<evidence type="ECO:0000255" key="2">
    <source>
        <dbReference type="PROSITE-ProRule" id="PRU00114"/>
    </source>
</evidence>
<evidence type="ECO:0000255" key="3">
    <source>
        <dbReference type="PROSITE-ProRule" id="PRU00316"/>
    </source>
</evidence>
<evidence type="ECO:0000256" key="4">
    <source>
        <dbReference type="SAM" id="MobiDB-lite"/>
    </source>
</evidence>
<evidence type="ECO:0000305" key="5"/>
<proteinExistence type="evidence at protein level"/>
<name>NGCA_CHICK</name>
<reference key="1">
    <citation type="journal article" date="1991" name="J. Cell Biol.">
        <title>Structure of the chicken neuron-glia cell adhesion molecule, Ng-CAM: origin of the polypeptides and relation to the Ig superfamily.</title>
        <authorList>
            <person name="Burgoon M.P."/>
            <person name="Grumet M."/>
            <person name="Mauro V."/>
            <person name="Edelman G.M."/>
            <person name="Cunningham B.A."/>
        </authorList>
    </citation>
    <scope>NUCLEOTIDE SEQUENCE [MRNA]</scope>
    <scope>PARTIAL PROTEIN SEQUENCE</scope>
    <source>
        <tissue>Brain</tissue>
    </source>
</reference>
<reference key="2">
    <citation type="submission" date="1994-07" db="EMBL/GenBank/DDBJ databases">
        <authorList>
            <person name="Burgoon M.P."/>
        </authorList>
    </citation>
    <scope>SEQUENCE REVISION</scope>
</reference>
<protein>
    <recommendedName>
        <fullName>Neuronal-glial cell adhesion molecule</fullName>
        <shortName>Ng-CAM</shortName>
    </recommendedName>
</protein>
<organism>
    <name type="scientific">Gallus gallus</name>
    <name type="common">Chicken</name>
    <dbReference type="NCBI Taxonomy" id="9031"/>
    <lineage>
        <taxon>Eukaryota</taxon>
        <taxon>Metazoa</taxon>
        <taxon>Chordata</taxon>
        <taxon>Craniata</taxon>
        <taxon>Vertebrata</taxon>
        <taxon>Euteleostomi</taxon>
        <taxon>Archelosauria</taxon>
        <taxon>Archosauria</taxon>
        <taxon>Dinosauria</taxon>
        <taxon>Saurischia</taxon>
        <taxon>Theropoda</taxon>
        <taxon>Coelurosauria</taxon>
        <taxon>Aves</taxon>
        <taxon>Neognathae</taxon>
        <taxon>Galloanserae</taxon>
        <taxon>Galliformes</taxon>
        <taxon>Phasianidae</taxon>
        <taxon>Phasianinae</taxon>
        <taxon>Gallus</taxon>
    </lineage>
</organism>
<feature type="signal peptide">
    <location>
        <begin position="1"/>
        <end position="20"/>
    </location>
</feature>
<feature type="chain" id="PRO_0000015056" description="Neuronal-glial cell adhesion molecule">
    <location>
        <begin position="21"/>
        <end position="1266"/>
    </location>
</feature>
<feature type="topological domain" description="Extracellular" evidence="1">
    <location>
        <begin position="21"/>
        <end position="1130"/>
    </location>
</feature>
<feature type="transmembrane region" description="Helical" evidence="1">
    <location>
        <begin position="1131"/>
        <end position="1153"/>
    </location>
</feature>
<feature type="topological domain" description="Cytoplasmic" evidence="1">
    <location>
        <begin position="1154"/>
        <end position="1266"/>
    </location>
</feature>
<feature type="domain" description="Ig-like C2-type 1">
    <location>
        <begin position="36"/>
        <end position="128"/>
    </location>
</feature>
<feature type="domain" description="Ig-like C2-type 2">
    <location>
        <begin position="135"/>
        <end position="221"/>
    </location>
</feature>
<feature type="domain" description="Ig-like C2-type 3">
    <location>
        <begin position="236"/>
        <end position="322"/>
    </location>
</feature>
<feature type="domain" description="Ig-like C2-type 4">
    <location>
        <begin position="327"/>
        <end position="413"/>
    </location>
</feature>
<feature type="domain" description="Ig-like C2-type 5">
    <location>
        <begin position="418"/>
        <end position="506"/>
    </location>
</feature>
<feature type="domain" description="Ig-like C2-type 6">
    <location>
        <begin position="510"/>
        <end position="597"/>
    </location>
</feature>
<feature type="domain" description="Fibronectin type-III 1" evidence="3">
    <location>
        <begin position="603"/>
        <end position="698"/>
    </location>
</feature>
<feature type="domain" description="Fibronectin type-III 2" evidence="3">
    <location>
        <begin position="700"/>
        <end position="804"/>
    </location>
</feature>
<feature type="domain" description="Fibronectin type-III 3" evidence="3">
    <location>
        <begin position="809"/>
        <end position="930"/>
    </location>
</feature>
<feature type="domain" description="Fibronectin type-III 4" evidence="3">
    <location>
        <begin position="934"/>
        <end position="1021"/>
    </location>
</feature>
<feature type="domain" description="Fibronectin type-III 5" evidence="3">
    <location>
        <begin position="1022"/>
        <end position="1118"/>
    </location>
</feature>
<feature type="region of interest" description="Disordered" evidence="4">
    <location>
        <begin position="685"/>
        <end position="710"/>
    </location>
</feature>
<feature type="region of interest" description="Disordered" evidence="4">
    <location>
        <begin position="857"/>
        <end position="882"/>
    </location>
</feature>
<feature type="region of interest" description="Disordered" evidence="4">
    <location>
        <begin position="1004"/>
        <end position="1025"/>
    </location>
</feature>
<feature type="region of interest" description="Disordered" evidence="4">
    <location>
        <begin position="1163"/>
        <end position="1266"/>
    </location>
</feature>
<feature type="short sequence motif" description="Cell attachment site" evidence="1">
    <location>
        <begin position="914"/>
        <end position="916"/>
    </location>
</feature>
<feature type="compositionally biased region" description="Pro residues" evidence="4">
    <location>
        <begin position="862"/>
        <end position="881"/>
    </location>
</feature>
<feature type="compositionally biased region" description="Basic and acidic residues" evidence="4">
    <location>
        <begin position="1163"/>
        <end position="1195"/>
    </location>
</feature>
<feature type="compositionally biased region" description="Gly residues" evidence="4">
    <location>
        <begin position="1199"/>
        <end position="1211"/>
    </location>
</feature>
<feature type="glycosylation site" description="N-linked (GlcNAc...) asparagine" evidence="1">
    <location>
        <position position="97"/>
    </location>
</feature>
<feature type="glycosylation site" description="N-linked (GlcNAc...) asparagine" evidence="1">
    <location>
        <position position="288"/>
    </location>
</feature>
<feature type="glycosylation site" description="N-linked (GlcNAc...) asparagine" evidence="1">
    <location>
        <position position="390"/>
    </location>
</feature>
<feature type="glycosylation site" description="N-linked (GlcNAc...) asparagine" evidence="1">
    <location>
        <position position="434"/>
    </location>
</feature>
<feature type="glycosylation site" description="N-linked (GlcNAc...) asparagine" evidence="1">
    <location>
        <position position="472"/>
    </location>
</feature>
<feature type="glycosylation site" description="N-linked (GlcNAc...) asparagine" evidence="1">
    <location>
        <position position="498"/>
    </location>
</feature>
<feature type="glycosylation site" description="N-linked (GlcNAc...) asparagine" evidence="1">
    <location>
        <position position="712"/>
    </location>
</feature>
<feature type="glycosylation site" description="N-linked (GlcNAc...) asparagine" evidence="1">
    <location>
        <position position="819"/>
    </location>
</feature>
<feature type="glycosylation site" description="N-linked (GlcNAc...) asparagine" evidence="1">
    <location>
        <position position="1061"/>
    </location>
</feature>
<feature type="glycosylation site" description="N-linked (GlcNAc...) asparagine" evidence="1">
    <location>
        <position position="1075"/>
    </location>
</feature>
<feature type="glycosylation site" description="N-linked (GlcNAc...) asparagine" evidence="1">
    <location>
        <position position="1100"/>
    </location>
</feature>
<feature type="glycosylation site" description="N-linked (GlcNAc...) asparagine" evidence="1">
    <location>
        <position position="1116"/>
    </location>
</feature>
<feature type="disulfide bond" evidence="2">
    <location>
        <begin position="58"/>
        <end position="110"/>
    </location>
</feature>
<feature type="disulfide bond" evidence="2">
    <location>
        <begin position="154"/>
        <end position="205"/>
    </location>
</feature>
<feature type="disulfide bond" evidence="2">
    <location>
        <begin position="260"/>
        <end position="306"/>
    </location>
</feature>
<feature type="disulfide bond" evidence="2">
    <location>
        <begin position="348"/>
        <end position="397"/>
    </location>
</feature>
<feature type="disulfide bond" evidence="2">
    <location>
        <begin position="441"/>
        <end position="490"/>
    </location>
</feature>
<feature type="disulfide bond" evidence="2">
    <location>
        <begin position="532"/>
        <end position="581"/>
    </location>
</feature>
<dbReference type="EMBL" id="X56969">
    <property type="protein sequence ID" value="CAA40290.1"/>
    <property type="molecule type" value="mRNA"/>
</dbReference>
<dbReference type="PIR" id="A37967">
    <property type="entry name" value="A37967"/>
</dbReference>
<dbReference type="RefSeq" id="NP_990484.1">
    <property type="nucleotide sequence ID" value="NM_205153.1"/>
</dbReference>
<dbReference type="SMR" id="Q03696"/>
<dbReference type="FunCoup" id="Q03696">
    <property type="interactions" value="85"/>
</dbReference>
<dbReference type="IntAct" id="Q03696">
    <property type="interactions" value="1"/>
</dbReference>
<dbReference type="GlyGen" id="Q03696">
    <property type="glycosylation" value="14 sites"/>
</dbReference>
<dbReference type="GeneID" id="396059"/>
<dbReference type="CTD" id="3897"/>
<dbReference type="VEuPathDB" id="HostDB:geneid_396202"/>
<dbReference type="InParanoid" id="Q03696"/>
<dbReference type="PhylomeDB" id="Q03696"/>
<dbReference type="PRO" id="PR:Q03696"/>
<dbReference type="Proteomes" id="UP000000539">
    <property type="component" value="Unassembled WGS sequence"/>
</dbReference>
<dbReference type="GO" id="GO:0030424">
    <property type="term" value="C:axon"/>
    <property type="evidence" value="ECO:0000314"/>
    <property type="project" value="AgBase"/>
</dbReference>
<dbReference type="GO" id="GO:0044295">
    <property type="term" value="C:axonal growth cone"/>
    <property type="evidence" value="ECO:0000314"/>
    <property type="project" value="AgBase"/>
</dbReference>
<dbReference type="GO" id="GO:0005886">
    <property type="term" value="C:plasma membrane"/>
    <property type="evidence" value="ECO:0000318"/>
    <property type="project" value="GO_Central"/>
</dbReference>
<dbReference type="GO" id="GO:0098632">
    <property type="term" value="F:cell-cell adhesion mediator activity"/>
    <property type="evidence" value="ECO:0000318"/>
    <property type="project" value="GO_Central"/>
</dbReference>
<dbReference type="GO" id="GO:0007411">
    <property type="term" value="P:axon guidance"/>
    <property type="evidence" value="ECO:0000318"/>
    <property type="project" value="GO_Central"/>
</dbReference>
<dbReference type="GO" id="GO:0070593">
    <property type="term" value="P:dendrite self-avoidance"/>
    <property type="evidence" value="ECO:0000318"/>
    <property type="project" value="GO_Central"/>
</dbReference>
<dbReference type="GO" id="GO:0007156">
    <property type="term" value="P:homophilic cell adhesion via plasma membrane adhesion molecules"/>
    <property type="evidence" value="ECO:0000318"/>
    <property type="project" value="GO_Central"/>
</dbReference>
<dbReference type="CDD" id="cd00063">
    <property type="entry name" value="FN3"/>
    <property type="match status" value="4"/>
</dbReference>
<dbReference type="CDD" id="cd05867">
    <property type="entry name" value="Ig4_L1-CAM_like"/>
    <property type="match status" value="1"/>
</dbReference>
<dbReference type="CDD" id="cd05845">
    <property type="entry name" value="IgI_2_L1-CAM_like"/>
    <property type="match status" value="1"/>
</dbReference>
<dbReference type="FunFam" id="2.60.40.10:FF:000357">
    <property type="entry name" value="Fc receptor like 1"/>
    <property type="match status" value="1"/>
</dbReference>
<dbReference type="FunFam" id="2.60.40.10:FF:000057">
    <property type="entry name" value="neural cell adhesion molecule L1"/>
    <property type="match status" value="1"/>
</dbReference>
<dbReference type="FunFam" id="2.60.40.10:FF:000367">
    <property type="entry name" value="Neural cell adhesion molecule L1-like protein"/>
    <property type="match status" value="1"/>
</dbReference>
<dbReference type="FunFam" id="2.60.40.10:FF:002946">
    <property type="entry name" value="Neuron-glia cell adhesion molecule (Ng-CAM)"/>
    <property type="match status" value="1"/>
</dbReference>
<dbReference type="FunFam" id="2.60.40.10:FF:003104">
    <property type="entry name" value="Neuron-glia cell adhesion molecule (Ng-CAM)"/>
    <property type="match status" value="1"/>
</dbReference>
<dbReference type="FunFam" id="2.60.40.10:FF:000005">
    <property type="entry name" value="Neuronal cell adhesion molecule"/>
    <property type="match status" value="1"/>
</dbReference>
<dbReference type="FunFam" id="2.60.40.10:FF:000038">
    <property type="entry name" value="Neuronal cell adhesion molecule"/>
    <property type="match status" value="1"/>
</dbReference>
<dbReference type="FunFam" id="2.60.40.10:FF:000078">
    <property type="entry name" value="Neuronal cell adhesion molecule"/>
    <property type="match status" value="1"/>
</dbReference>
<dbReference type="FunFam" id="2.60.40.10:FF:000347">
    <property type="entry name" value="Neuronal cell adhesion molecule"/>
    <property type="match status" value="1"/>
</dbReference>
<dbReference type="Gene3D" id="2.60.40.10">
    <property type="entry name" value="Immunoglobulins"/>
    <property type="match status" value="10"/>
</dbReference>
<dbReference type="InterPro" id="IPR003961">
    <property type="entry name" value="FN3_dom"/>
</dbReference>
<dbReference type="InterPro" id="IPR036116">
    <property type="entry name" value="FN3_sf"/>
</dbReference>
<dbReference type="InterPro" id="IPR007110">
    <property type="entry name" value="Ig-like_dom"/>
</dbReference>
<dbReference type="InterPro" id="IPR036179">
    <property type="entry name" value="Ig-like_dom_sf"/>
</dbReference>
<dbReference type="InterPro" id="IPR013783">
    <property type="entry name" value="Ig-like_fold"/>
</dbReference>
<dbReference type="InterPro" id="IPR013098">
    <property type="entry name" value="Ig_I-set"/>
</dbReference>
<dbReference type="InterPro" id="IPR003599">
    <property type="entry name" value="Ig_sub"/>
</dbReference>
<dbReference type="InterPro" id="IPR003598">
    <property type="entry name" value="Ig_sub2"/>
</dbReference>
<dbReference type="InterPro" id="IPR026966">
    <property type="entry name" value="Neurofascin/L1/NrCAM_C"/>
</dbReference>
<dbReference type="PANTHER" id="PTHR44170:SF44">
    <property type="entry name" value="L1 CELL ADHESION MOLECULE"/>
    <property type="match status" value="1"/>
</dbReference>
<dbReference type="PANTHER" id="PTHR44170">
    <property type="entry name" value="PROTEIN SIDEKICK"/>
    <property type="match status" value="1"/>
</dbReference>
<dbReference type="Pfam" id="PF13882">
    <property type="entry name" value="Bravo_FIGEY"/>
    <property type="match status" value="1"/>
</dbReference>
<dbReference type="Pfam" id="PF00041">
    <property type="entry name" value="fn3"/>
    <property type="match status" value="3"/>
</dbReference>
<dbReference type="Pfam" id="PF07679">
    <property type="entry name" value="I-set"/>
    <property type="match status" value="3"/>
</dbReference>
<dbReference type="Pfam" id="PF13927">
    <property type="entry name" value="Ig_3"/>
    <property type="match status" value="2"/>
</dbReference>
<dbReference type="SMART" id="SM00060">
    <property type="entry name" value="FN3"/>
    <property type="match status" value="4"/>
</dbReference>
<dbReference type="SMART" id="SM00409">
    <property type="entry name" value="IG"/>
    <property type="match status" value="6"/>
</dbReference>
<dbReference type="SMART" id="SM00408">
    <property type="entry name" value="IGc2"/>
    <property type="match status" value="5"/>
</dbReference>
<dbReference type="SUPFAM" id="SSF49265">
    <property type="entry name" value="Fibronectin type III"/>
    <property type="match status" value="3"/>
</dbReference>
<dbReference type="SUPFAM" id="SSF48726">
    <property type="entry name" value="Immunoglobulin"/>
    <property type="match status" value="6"/>
</dbReference>
<dbReference type="PROSITE" id="PS50853">
    <property type="entry name" value="FN3"/>
    <property type="match status" value="5"/>
</dbReference>
<dbReference type="PROSITE" id="PS50835">
    <property type="entry name" value="IG_LIKE"/>
    <property type="match status" value="6"/>
</dbReference>
<comment type="function">
    <text>Mediates the adhesion of neurons to neurons and neurons to glia. It is involved in neuronal migration, neurite fasciculation and outgrowth.</text>
</comment>
<comment type="subunit">
    <text>Binds to itself and to axonin 1.</text>
</comment>
<comment type="subcellular location">
    <subcellularLocation>
        <location>Cell membrane</location>
        <topology>Single-pass type I membrane protein</topology>
    </subcellularLocation>
</comment>
<comment type="tissue specificity">
    <text>Brain.</text>
</comment>
<comment type="similarity">
    <text evidence="5">Belongs to the immunoglobulin superfamily. L1/neurofascin/NgCAM family.</text>
</comment>